<accession>A4G0A4</accession>
<keyword id="KW-0963">Cytoplasm</keyword>
<keyword id="KW-0255">Endonuclease</keyword>
<keyword id="KW-0378">Hydrolase</keyword>
<keyword id="KW-0479">Metal-binding</keyword>
<keyword id="KW-0540">Nuclease</keyword>
<comment type="function">
    <text evidence="1">May function in recognizing stalled ribosomes, interact with stem-loop structures in stalled mRNA molecules, and effect endonucleolytic cleavage of the mRNA. May play a role in the release non-functional ribosomes and degradation of damaged mRNAs. Has endoribonuclease activity.</text>
</comment>
<comment type="cofactor">
    <cofactor evidence="1">
        <name>a divalent metal cation</name>
        <dbReference type="ChEBI" id="CHEBI:60240"/>
    </cofactor>
</comment>
<comment type="subunit">
    <text evidence="1">Monomer.</text>
</comment>
<comment type="subcellular location">
    <subcellularLocation>
        <location evidence="1">Cytoplasm</location>
    </subcellularLocation>
</comment>
<comment type="domain">
    <text evidence="1">The N-terminal domain has the RNA-binding Sm fold. It harbors the endoribonuclease activity.</text>
</comment>
<comment type="similarity">
    <text evidence="1">Belongs to the eukaryotic release factor 1 family. Pelota subfamily.</text>
</comment>
<name>PELO_METM5</name>
<sequence>MKIIQEIPEKNIIKLIPENLDDLWHLSNIIQPYNAIYAVTERRTEDKGDKLRADRGTKRRVFLGIKAEKINFHEDFNRLRVSGKIIHAPDDIPIGSYHTIDIEPLLQVSVQKNWKKWDLVRLKEAEDSSKKPKVVVVILDDSEADIFLVREFGIKELVSIKSGVSKKLDYKQNEQAKFSYYSDIINSISEFEGKILFAGPGFGKNNIQNYISEKHKDLAPNVVVESANHTGKSGLSEILKSGIIDKIYGEARISKETQVIEKLLEEISKKGLAAYGIESVNNAMNYSAIDTLLLTDEYLRRNRRNIEELMNSVENINGNVLIISTEHDAGKQLKALGGISALLRFPIE</sequence>
<gene>
    <name evidence="1" type="primary">pelA</name>
    <name type="ordered locus">MmarC5_1591</name>
</gene>
<organism>
    <name type="scientific">Methanococcus maripaludis (strain C5 / ATCC BAA-1333)</name>
    <dbReference type="NCBI Taxonomy" id="402880"/>
    <lineage>
        <taxon>Archaea</taxon>
        <taxon>Methanobacteriati</taxon>
        <taxon>Methanobacteriota</taxon>
        <taxon>Methanomada group</taxon>
        <taxon>Methanococci</taxon>
        <taxon>Methanococcales</taxon>
        <taxon>Methanococcaceae</taxon>
        <taxon>Methanococcus</taxon>
    </lineage>
</organism>
<reference key="1">
    <citation type="submission" date="2007-03" db="EMBL/GenBank/DDBJ databases">
        <title>Complete sequence of chromosome of Methanococcus maripaludis C5.</title>
        <authorList>
            <consortium name="US DOE Joint Genome Institute"/>
            <person name="Copeland A."/>
            <person name="Lucas S."/>
            <person name="Lapidus A."/>
            <person name="Barry K."/>
            <person name="Glavina del Rio T."/>
            <person name="Dalin E."/>
            <person name="Tice H."/>
            <person name="Pitluck S."/>
            <person name="Chertkov O."/>
            <person name="Brettin T."/>
            <person name="Bruce D."/>
            <person name="Han C."/>
            <person name="Detter J.C."/>
            <person name="Schmutz J."/>
            <person name="Larimer F."/>
            <person name="Land M."/>
            <person name="Hauser L."/>
            <person name="Kyrpides N."/>
            <person name="Mikhailova N."/>
            <person name="Sieprawska-Lupa M."/>
            <person name="Whitman W.B."/>
            <person name="Richardson P."/>
        </authorList>
    </citation>
    <scope>NUCLEOTIDE SEQUENCE [LARGE SCALE GENOMIC DNA]</scope>
    <source>
        <strain>C5 / ATCC BAA-1333</strain>
    </source>
</reference>
<proteinExistence type="inferred from homology"/>
<feature type="chain" id="PRO_0000361796" description="Protein pelota homolog">
    <location>
        <begin position="1"/>
        <end position="348"/>
    </location>
</feature>
<evidence type="ECO:0000255" key="1">
    <source>
        <dbReference type="HAMAP-Rule" id="MF_01853"/>
    </source>
</evidence>
<protein>
    <recommendedName>
        <fullName evidence="1">Protein pelota homolog</fullName>
        <ecNumber evidence="1">3.1.-.-</ecNumber>
    </recommendedName>
</protein>
<dbReference type="EC" id="3.1.-.-" evidence="1"/>
<dbReference type="EMBL" id="CP000609">
    <property type="protein sequence ID" value="ABO35888.1"/>
    <property type="molecule type" value="Genomic_DNA"/>
</dbReference>
<dbReference type="RefSeq" id="WP_011869335.1">
    <property type="nucleotide sequence ID" value="NC_009135.1"/>
</dbReference>
<dbReference type="SMR" id="A4G0A4"/>
<dbReference type="STRING" id="402880.MmarC5_1591"/>
<dbReference type="GeneID" id="4927505"/>
<dbReference type="KEGG" id="mmq:MmarC5_1591"/>
<dbReference type="eggNOG" id="arCOG01741">
    <property type="taxonomic scope" value="Archaea"/>
</dbReference>
<dbReference type="HOGENOM" id="CLU_023334_0_0_2"/>
<dbReference type="OrthoDB" id="31300at2157"/>
<dbReference type="Proteomes" id="UP000000253">
    <property type="component" value="Chromosome"/>
</dbReference>
<dbReference type="GO" id="GO:0005737">
    <property type="term" value="C:cytoplasm"/>
    <property type="evidence" value="ECO:0007669"/>
    <property type="project" value="UniProtKB-SubCell"/>
</dbReference>
<dbReference type="GO" id="GO:0004519">
    <property type="term" value="F:endonuclease activity"/>
    <property type="evidence" value="ECO:0007669"/>
    <property type="project" value="UniProtKB-UniRule"/>
</dbReference>
<dbReference type="GO" id="GO:0046872">
    <property type="term" value="F:metal ion binding"/>
    <property type="evidence" value="ECO:0007669"/>
    <property type="project" value="UniProtKB-UniRule"/>
</dbReference>
<dbReference type="GO" id="GO:0070651">
    <property type="term" value="P:nonfunctional rRNA decay"/>
    <property type="evidence" value="ECO:0007669"/>
    <property type="project" value="TreeGrafter"/>
</dbReference>
<dbReference type="GO" id="GO:0070966">
    <property type="term" value="P:nuclear-transcribed mRNA catabolic process, no-go decay"/>
    <property type="evidence" value="ECO:0007669"/>
    <property type="project" value="InterPro"/>
</dbReference>
<dbReference type="GO" id="GO:0070481">
    <property type="term" value="P:nuclear-transcribed mRNA catabolic process, non-stop decay"/>
    <property type="evidence" value="ECO:0007669"/>
    <property type="project" value="InterPro"/>
</dbReference>
<dbReference type="GO" id="GO:0032790">
    <property type="term" value="P:ribosome disassembly"/>
    <property type="evidence" value="ECO:0007669"/>
    <property type="project" value="TreeGrafter"/>
</dbReference>
<dbReference type="GO" id="GO:0071025">
    <property type="term" value="P:RNA surveillance"/>
    <property type="evidence" value="ECO:0007669"/>
    <property type="project" value="InterPro"/>
</dbReference>
<dbReference type="Gene3D" id="3.30.1330.30">
    <property type="match status" value="1"/>
</dbReference>
<dbReference type="Gene3D" id="3.30.420.60">
    <property type="entry name" value="eRF1 domain 2"/>
    <property type="match status" value="1"/>
</dbReference>
<dbReference type="Gene3D" id="2.30.30.870">
    <property type="entry name" value="Pelota, domain A"/>
    <property type="match status" value="1"/>
</dbReference>
<dbReference type="HAMAP" id="MF_01853">
    <property type="entry name" value="PelO"/>
    <property type="match status" value="1"/>
</dbReference>
<dbReference type="InterPro" id="IPR042226">
    <property type="entry name" value="eFR1_2_sf"/>
</dbReference>
<dbReference type="InterPro" id="IPR005140">
    <property type="entry name" value="eRF1_1_Pelota"/>
</dbReference>
<dbReference type="InterPro" id="IPR005142">
    <property type="entry name" value="eRF1_3"/>
</dbReference>
<dbReference type="InterPro" id="IPR038069">
    <property type="entry name" value="Pelota/DOM34_N"/>
</dbReference>
<dbReference type="InterPro" id="IPR023521">
    <property type="entry name" value="Pelota_arc"/>
</dbReference>
<dbReference type="InterPro" id="IPR029064">
    <property type="entry name" value="Ribosomal_eL30-like_sf"/>
</dbReference>
<dbReference type="InterPro" id="IPR004405">
    <property type="entry name" value="Transl-rel_pelota"/>
</dbReference>
<dbReference type="NCBIfam" id="TIGR00111">
    <property type="entry name" value="pelota"/>
    <property type="match status" value="1"/>
</dbReference>
<dbReference type="PANTHER" id="PTHR10853">
    <property type="entry name" value="PELOTA"/>
    <property type="match status" value="1"/>
</dbReference>
<dbReference type="PANTHER" id="PTHR10853:SF0">
    <property type="entry name" value="PROTEIN PELOTA HOMOLOG"/>
    <property type="match status" value="1"/>
</dbReference>
<dbReference type="Pfam" id="PF03463">
    <property type="entry name" value="eRF1_1"/>
    <property type="match status" value="1"/>
</dbReference>
<dbReference type="Pfam" id="PF03465">
    <property type="entry name" value="eRF1_3"/>
    <property type="match status" value="1"/>
</dbReference>
<dbReference type="SMART" id="SM01194">
    <property type="entry name" value="eRF1_1"/>
    <property type="match status" value="1"/>
</dbReference>
<dbReference type="SUPFAM" id="SSF159065">
    <property type="entry name" value="Dom34/Pelota N-terminal domain-like"/>
    <property type="match status" value="1"/>
</dbReference>
<dbReference type="SUPFAM" id="SSF55315">
    <property type="entry name" value="L30e-like"/>
    <property type="match status" value="1"/>
</dbReference>
<dbReference type="SUPFAM" id="SSF53137">
    <property type="entry name" value="Translational machinery components"/>
    <property type="match status" value="1"/>
</dbReference>